<reference key="1">
    <citation type="journal article" date="2002" name="Genome Res.">
        <title>The genome of Methanosarcina acetivorans reveals extensive metabolic and physiological diversity.</title>
        <authorList>
            <person name="Galagan J.E."/>
            <person name="Nusbaum C."/>
            <person name="Roy A."/>
            <person name="Endrizzi M.G."/>
            <person name="Macdonald P."/>
            <person name="FitzHugh W."/>
            <person name="Calvo S."/>
            <person name="Engels R."/>
            <person name="Smirnov S."/>
            <person name="Atnoor D."/>
            <person name="Brown A."/>
            <person name="Allen N."/>
            <person name="Naylor J."/>
            <person name="Stange-Thomann N."/>
            <person name="DeArellano K."/>
            <person name="Johnson R."/>
            <person name="Linton L."/>
            <person name="McEwan P."/>
            <person name="McKernan K."/>
            <person name="Talamas J."/>
            <person name="Tirrell A."/>
            <person name="Ye W."/>
            <person name="Zimmer A."/>
            <person name="Barber R.D."/>
            <person name="Cann I."/>
            <person name="Graham D.E."/>
            <person name="Grahame D.A."/>
            <person name="Guss A.M."/>
            <person name="Hedderich R."/>
            <person name="Ingram-Smith C."/>
            <person name="Kuettner H.C."/>
            <person name="Krzycki J.A."/>
            <person name="Leigh J.A."/>
            <person name="Li W."/>
            <person name="Liu J."/>
            <person name="Mukhopadhyay B."/>
            <person name="Reeve J.N."/>
            <person name="Smith K."/>
            <person name="Springer T.A."/>
            <person name="Umayam L.A."/>
            <person name="White O."/>
            <person name="White R.H."/>
            <person name="de Macario E.C."/>
            <person name="Ferry J.G."/>
            <person name="Jarrell K.F."/>
            <person name="Jing H."/>
            <person name="Macario A.J.L."/>
            <person name="Paulsen I.T."/>
            <person name="Pritchett M."/>
            <person name="Sowers K.R."/>
            <person name="Swanson R.V."/>
            <person name="Zinder S.H."/>
            <person name="Lander E."/>
            <person name="Metcalf W.W."/>
            <person name="Birren B."/>
        </authorList>
    </citation>
    <scope>NUCLEOTIDE SEQUENCE [LARGE SCALE GENOMIC DNA]</scope>
    <source>
        <strain>ATCC 35395 / DSM 2834 / JCM 12185 / C2A</strain>
    </source>
</reference>
<proteinExistence type="inferred from homology"/>
<evidence type="ECO:0000255" key="1">
    <source>
        <dbReference type="HAMAP-Rule" id="MF_01337"/>
    </source>
</evidence>
<evidence type="ECO:0000305" key="2"/>
<dbReference type="EMBL" id="AE010299">
    <property type="protein sequence ID" value="AAM04516.1"/>
    <property type="molecule type" value="Genomic_DNA"/>
</dbReference>
<dbReference type="RefSeq" id="WP_011021120.1">
    <property type="nucleotide sequence ID" value="NC_003552.1"/>
</dbReference>
<dbReference type="SMR" id="Q8TRS8"/>
<dbReference type="FunCoup" id="Q8TRS8">
    <property type="interactions" value="175"/>
</dbReference>
<dbReference type="STRING" id="188937.MA_1091"/>
<dbReference type="EnsemblBacteria" id="AAM04516">
    <property type="protein sequence ID" value="AAM04516"/>
    <property type="gene ID" value="MA_1091"/>
</dbReference>
<dbReference type="GeneID" id="1472981"/>
<dbReference type="KEGG" id="mac:MA_1091"/>
<dbReference type="HOGENOM" id="CLU_056222_2_0_2"/>
<dbReference type="InParanoid" id="Q8TRS8"/>
<dbReference type="OrthoDB" id="8644at2157"/>
<dbReference type="PhylomeDB" id="Q8TRS8"/>
<dbReference type="Proteomes" id="UP000002487">
    <property type="component" value="Chromosome"/>
</dbReference>
<dbReference type="GO" id="GO:0022625">
    <property type="term" value="C:cytosolic large ribosomal subunit"/>
    <property type="evidence" value="ECO:0000318"/>
    <property type="project" value="GO_Central"/>
</dbReference>
<dbReference type="GO" id="GO:0008097">
    <property type="term" value="F:5S rRNA binding"/>
    <property type="evidence" value="ECO:0000318"/>
    <property type="project" value="GO_Central"/>
</dbReference>
<dbReference type="GO" id="GO:0003735">
    <property type="term" value="F:structural constituent of ribosome"/>
    <property type="evidence" value="ECO:0000318"/>
    <property type="project" value="GO_Central"/>
</dbReference>
<dbReference type="GO" id="GO:0000027">
    <property type="term" value="P:ribosomal large subunit assembly"/>
    <property type="evidence" value="ECO:0000318"/>
    <property type="project" value="GO_Central"/>
</dbReference>
<dbReference type="GO" id="GO:0006412">
    <property type="term" value="P:translation"/>
    <property type="evidence" value="ECO:0007669"/>
    <property type="project" value="UniProtKB-UniRule"/>
</dbReference>
<dbReference type="CDD" id="cd00432">
    <property type="entry name" value="Ribosomal_L18_L5e"/>
    <property type="match status" value="1"/>
</dbReference>
<dbReference type="Gene3D" id="3.30.420.100">
    <property type="match status" value="1"/>
</dbReference>
<dbReference type="HAMAP" id="MF_01337_A">
    <property type="entry name" value="Ribosomal_uL18_A"/>
    <property type="match status" value="1"/>
</dbReference>
<dbReference type="InterPro" id="IPR005485">
    <property type="entry name" value="Rbsml_uL18_euk"/>
</dbReference>
<dbReference type="NCBIfam" id="NF006342">
    <property type="entry name" value="PRK08569.1"/>
    <property type="match status" value="1"/>
</dbReference>
<dbReference type="PANTHER" id="PTHR23410:SF12">
    <property type="entry name" value="LARGE RIBOSOMAL SUBUNIT PROTEIN UL18"/>
    <property type="match status" value="1"/>
</dbReference>
<dbReference type="PANTHER" id="PTHR23410">
    <property type="entry name" value="RIBOSOMAL PROTEIN L5-RELATED"/>
    <property type="match status" value="1"/>
</dbReference>
<dbReference type="Pfam" id="PF17144">
    <property type="entry name" value="Ribosomal_L5e"/>
    <property type="match status" value="2"/>
</dbReference>
<dbReference type="SUPFAM" id="SSF53137">
    <property type="entry name" value="Translational machinery components"/>
    <property type="match status" value="1"/>
</dbReference>
<protein>
    <recommendedName>
        <fullName evidence="1">Large ribosomal subunit protein uL18</fullName>
    </recommendedName>
    <alternativeName>
        <fullName evidence="2">50S ribosomal protein L18</fullName>
    </alternativeName>
</protein>
<name>RL18_METAC</name>
<organism>
    <name type="scientific">Methanosarcina acetivorans (strain ATCC 35395 / DSM 2834 / JCM 12185 / C2A)</name>
    <dbReference type="NCBI Taxonomy" id="188937"/>
    <lineage>
        <taxon>Archaea</taxon>
        <taxon>Methanobacteriati</taxon>
        <taxon>Methanobacteriota</taxon>
        <taxon>Stenosarchaea group</taxon>
        <taxon>Methanomicrobia</taxon>
        <taxon>Methanosarcinales</taxon>
        <taxon>Methanosarcinaceae</taxon>
        <taxon>Methanosarcina</taxon>
    </lineage>
</organism>
<sequence>MATGPRYKVPFRRRREGRTNYHLRLKLLLSRQDRVVVRKSSRNVQIQLIAPTPDGDITYSSAVSNELAKYGYTGATGNTTAAYLTGLLFGLKSLQKGYEGGILDIGLQASSAGSRVYAALKGVVDSGFEIPCSPEVFPPDERIRGEHIAGYREESSDLPEQFEATKEKIFAEFS</sequence>
<keyword id="KW-1185">Reference proteome</keyword>
<keyword id="KW-0687">Ribonucleoprotein</keyword>
<keyword id="KW-0689">Ribosomal protein</keyword>
<keyword id="KW-0694">RNA-binding</keyword>
<keyword id="KW-0699">rRNA-binding</keyword>
<accession>Q8TRS8</accession>
<gene>
    <name evidence="1" type="primary">rpl18</name>
    <name type="ordered locus">MA_1091</name>
</gene>
<comment type="function">
    <text evidence="1">This is one of the proteins that bind and probably mediate the attachment of the 5S RNA into the large ribosomal subunit, where it forms part of the central protuberance.</text>
</comment>
<comment type="subunit">
    <text evidence="1">Part of the 50S ribosomal subunit. Contacts the 5S and 23S rRNAs.</text>
</comment>
<comment type="similarity">
    <text evidence="1">Belongs to the universal ribosomal protein uL18 family.</text>
</comment>
<feature type="chain" id="PRO_0000131404" description="Large ribosomal subunit protein uL18">
    <location>
        <begin position="1"/>
        <end position="174"/>
    </location>
</feature>